<feature type="chain" id="PRO_0000166461" description="Uncharacterized membrane protein MJ1375">
    <location>
        <begin position="1"/>
        <end position="415"/>
    </location>
</feature>
<feature type="transmembrane region" description="Helical" evidence="1">
    <location>
        <begin position="20"/>
        <end position="40"/>
    </location>
</feature>
<feature type="transmembrane region" description="Helical" evidence="1">
    <location>
        <begin position="43"/>
        <end position="63"/>
    </location>
</feature>
<feature type="transmembrane region" description="Helical" evidence="1">
    <location>
        <begin position="78"/>
        <end position="98"/>
    </location>
</feature>
<feature type="transmembrane region" description="Helical" evidence="1">
    <location>
        <begin position="109"/>
        <end position="129"/>
    </location>
</feature>
<feature type="transmembrane region" description="Helical" evidence="1">
    <location>
        <begin position="155"/>
        <end position="175"/>
    </location>
</feature>
<feature type="transmembrane region" description="Helical" evidence="1">
    <location>
        <begin position="243"/>
        <end position="263"/>
    </location>
</feature>
<feature type="transmembrane region" description="Helical" evidence="1">
    <location>
        <begin position="300"/>
        <end position="320"/>
    </location>
</feature>
<feature type="transmembrane region" description="Helical" evidence="1">
    <location>
        <begin position="328"/>
        <end position="348"/>
    </location>
</feature>
<feature type="transmembrane region" description="Helical" evidence="1">
    <location>
        <begin position="360"/>
        <end position="380"/>
    </location>
</feature>
<feature type="transmembrane region" description="Helical" evidence="1">
    <location>
        <begin position="388"/>
        <end position="408"/>
    </location>
</feature>
<gene>
    <name type="ordered locus">MJ1375</name>
</gene>
<accession>Q58770</accession>
<protein>
    <recommendedName>
        <fullName>Uncharacterized membrane protein MJ1375</fullName>
    </recommendedName>
</protein>
<keyword id="KW-1003">Cell membrane</keyword>
<keyword id="KW-0472">Membrane</keyword>
<keyword id="KW-1185">Reference proteome</keyword>
<keyword id="KW-0812">Transmembrane</keyword>
<keyword id="KW-1133">Transmembrane helix</keyword>
<dbReference type="EMBL" id="L77117">
    <property type="protein sequence ID" value="AAB99382.1"/>
    <property type="molecule type" value="Genomic_DNA"/>
</dbReference>
<dbReference type="PIR" id="F64471">
    <property type="entry name" value="F64471"/>
</dbReference>
<dbReference type="RefSeq" id="WP_010870892.1">
    <property type="nucleotide sequence ID" value="NC_000909.1"/>
</dbReference>
<dbReference type="SMR" id="Q58770"/>
<dbReference type="FunCoup" id="Q58770">
    <property type="interactions" value="2"/>
</dbReference>
<dbReference type="STRING" id="243232.MJ_1375"/>
<dbReference type="PaxDb" id="243232-MJ_1375"/>
<dbReference type="EnsemblBacteria" id="AAB99382">
    <property type="protein sequence ID" value="AAB99382"/>
    <property type="gene ID" value="MJ_1375"/>
</dbReference>
<dbReference type="GeneID" id="1452278"/>
<dbReference type="KEGG" id="mja:MJ_1375"/>
<dbReference type="eggNOG" id="arCOG02209">
    <property type="taxonomic scope" value="Archaea"/>
</dbReference>
<dbReference type="HOGENOM" id="CLU_648322_0_0_2"/>
<dbReference type="InParanoid" id="Q58770"/>
<dbReference type="OrthoDB" id="19148at2157"/>
<dbReference type="PhylomeDB" id="Q58770"/>
<dbReference type="Proteomes" id="UP000000805">
    <property type="component" value="Chromosome"/>
</dbReference>
<dbReference type="GO" id="GO:0005886">
    <property type="term" value="C:plasma membrane"/>
    <property type="evidence" value="ECO:0000318"/>
    <property type="project" value="GO_Central"/>
</dbReference>
<dbReference type="CDD" id="cd13128">
    <property type="entry name" value="MATE_Wzx_like"/>
    <property type="match status" value="1"/>
</dbReference>
<dbReference type="InterPro" id="IPR050833">
    <property type="entry name" value="Poly_Biosynth_Transport"/>
</dbReference>
<dbReference type="InterPro" id="IPR002797">
    <property type="entry name" value="Polysacc_synth"/>
</dbReference>
<dbReference type="PANTHER" id="PTHR30250:SF28">
    <property type="entry name" value="POLYSACCHARIDE BIOSYNTHESIS PROTEIN"/>
    <property type="match status" value="1"/>
</dbReference>
<dbReference type="PANTHER" id="PTHR30250">
    <property type="entry name" value="PST FAMILY PREDICTED COLANIC ACID TRANSPORTER"/>
    <property type="match status" value="1"/>
</dbReference>
<dbReference type="Pfam" id="PF01943">
    <property type="entry name" value="Polysacc_synt"/>
    <property type="match status" value="1"/>
</dbReference>
<name>Y1375_METJA</name>
<reference key="1">
    <citation type="journal article" date="1996" name="Science">
        <title>Complete genome sequence of the methanogenic archaeon, Methanococcus jannaschii.</title>
        <authorList>
            <person name="Bult C.J."/>
            <person name="White O."/>
            <person name="Olsen G.J."/>
            <person name="Zhou L."/>
            <person name="Fleischmann R.D."/>
            <person name="Sutton G.G."/>
            <person name="Blake J.A."/>
            <person name="FitzGerald L.M."/>
            <person name="Clayton R.A."/>
            <person name="Gocayne J.D."/>
            <person name="Kerlavage A.R."/>
            <person name="Dougherty B.A."/>
            <person name="Tomb J.-F."/>
            <person name="Adams M.D."/>
            <person name="Reich C.I."/>
            <person name="Overbeek R."/>
            <person name="Kirkness E.F."/>
            <person name="Weinstock K.G."/>
            <person name="Merrick J.M."/>
            <person name="Glodek A."/>
            <person name="Scott J.L."/>
            <person name="Geoghagen N.S.M."/>
            <person name="Weidman J.F."/>
            <person name="Fuhrmann J.L."/>
            <person name="Nguyen D."/>
            <person name="Utterback T.R."/>
            <person name="Kelley J.M."/>
            <person name="Peterson J.D."/>
            <person name="Sadow P.W."/>
            <person name="Hanna M.C."/>
            <person name="Cotton M.D."/>
            <person name="Roberts K.M."/>
            <person name="Hurst M.A."/>
            <person name="Kaine B.P."/>
            <person name="Borodovsky M."/>
            <person name="Klenk H.-P."/>
            <person name="Fraser C.M."/>
            <person name="Smith H.O."/>
            <person name="Woese C.R."/>
            <person name="Venter J.C."/>
        </authorList>
    </citation>
    <scope>NUCLEOTIDE SEQUENCE [LARGE SCALE GENOMIC DNA]</scope>
    <source>
        <strain>ATCC 43067 / DSM 2661 / JAL-1 / JCM 10045 / NBRC 100440</strain>
    </source>
</reference>
<proteinExistence type="inferred from homology"/>
<evidence type="ECO:0000255" key="1"/>
<evidence type="ECO:0000305" key="2"/>
<sequence length="415" mass="45989">MSLCKDSIYILMSNLYSKGMAYLFYFITAFLLGTEAFGILKGLMPIADTLTIFFSSGIPPAIAKFLAEEKEVDINKYIPILYLMILLSVVGFILTPYIKYILGGHYLNLPNILYFAVGLCVVASTVIAFSRGILQGLLKMKYLSLTWIVEYTAKVILVFILTLYLGIFGSLLSISLAYLVGGIFGLYLIYKALKGKFDFKKLIDIKNTTKNIFSNFNLDILRYSIPIALTSSSYRLFGDIDNIVIMSIMGGFWSGIYGYSSLISRGIFMFASAVSIPLLPRISKTKDLSLLKEGIIQNTIFSSIFVIGCLFFPEIPLIAFFKTANPEGILCLRILAISSLFMSYYTLISSALQGLGYAKISFYIILFGLVLNIILNLILVNAYGIVGGSLATLITSISVFLIGVFAILRIKKHII</sequence>
<organism>
    <name type="scientific">Methanocaldococcus jannaschii (strain ATCC 43067 / DSM 2661 / JAL-1 / JCM 10045 / NBRC 100440)</name>
    <name type="common">Methanococcus jannaschii</name>
    <dbReference type="NCBI Taxonomy" id="243232"/>
    <lineage>
        <taxon>Archaea</taxon>
        <taxon>Methanobacteriati</taxon>
        <taxon>Methanobacteriota</taxon>
        <taxon>Methanomada group</taxon>
        <taxon>Methanococci</taxon>
        <taxon>Methanococcales</taxon>
        <taxon>Methanocaldococcaceae</taxon>
        <taxon>Methanocaldococcus</taxon>
    </lineage>
</organism>
<comment type="subcellular location">
    <subcellularLocation>
        <location evidence="2">Cell membrane</location>
        <topology evidence="2">Multi-pass membrane protein</topology>
    </subcellularLocation>
</comment>
<comment type="similarity">
    <text evidence="2">Belongs to the polysaccharide synthase family.</text>
</comment>